<reference key="1">
    <citation type="journal article" date="1994" name="Nature">
        <title>2.2 Mb of contiguous nucleotide sequence from chromosome III of C. elegans.</title>
        <authorList>
            <person name="Wilson R."/>
            <person name="Ainscough R."/>
            <person name="Anderson K."/>
            <person name="Baynes C."/>
            <person name="Berks M."/>
            <person name="Bonfield J."/>
            <person name="Burton J."/>
            <person name="Connell M."/>
            <person name="Copsey T."/>
            <person name="Cooper J."/>
            <person name="Coulson A."/>
            <person name="Craxton M."/>
            <person name="Dear S."/>
            <person name="Du Z."/>
            <person name="Durbin R."/>
            <person name="Favello A."/>
            <person name="Fraser A."/>
            <person name="Fulton L."/>
            <person name="Gardner A."/>
            <person name="Green P."/>
            <person name="Hawkins T."/>
            <person name="Hillier L."/>
            <person name="Jier M."/>
            <person name="Johnston L."/>
            <person name="Jones M."/>
            <person name="Kershaw J."/>
            <person name="Kirsten J."/>
            <person name="Laisster N."/>
            <person name="Latreille P."/>
            <person name="Lightning J."/>
            <person name="Lloyd C."/>
            <person name="Mortimore B."/>
            <person name="O'Callaghan M."/>
            <person name="Parsons J."/>
            <person name="Percy C."/>
            <person name="Rifken L."/>
            <person name="Roopra A."/>
            <person name="Saunders D."/>
            <person name="Shownkeen R."/>
            <person name="Sims M."/>
            <person name="Smaldon N."/>
            <person name="Smith A."/>
            <person name="Smith M."/>
            <person name="Sonnhammer E."/>
            <person name="Staden R."/>
            <person name="Sulston J."/>
            <person name="Thierry-Mieg J."/>
            <person name="Thomas K."/>
            <person name="Vaudin M."/>
            <person name="Vaughan K."/>
            <person name="Waterston R."/>
            <person name="Watson A."/>
            <person name="Weinstock L."/>
            <person name="Wilkinson-Sproat J."/>
            <person name="Wohldman P."/>
        </authorList>
    </citation>
    <scope>NUCLEOTIDE SEQUENCE [LARGE SCALE GENOMIC DNA]</scope>
    <source>
        <strain>Bristol N2</strain>
    </source>
</reference>
<reference key="2">
    <citation type="journal article" date="1998" name="Science">
        <title>Genome sequence of the nematode C. elegans: a platform for investigating biology.</title>
        <authorList>
            <consortium name="The C. elegans sequencing consortium"/>
        </authorList>
    </citation>
    <scope>NUCLEOTIDE SEQUENCE [LARGE SCALE GENOMIC DNA]</scope>
    <source>
        <strain>Bristol N2</strain>
    </source>
</reference>
<reference key="3">
    <citation type="journal article" date="2005" name="Nature">
        <title>Predictive models of molecular machines involved in Caenorhabditis elegans early embryogenesis.</title>
        <authorList>
            <person name="Gunsalus K.C."/>
            <person name="Ge H."/>
            <person name="Schetter A.J."/>
            <person name="Goldberg D.S."/>
            <person name="Han J.D."/>
            <person name="Hao T."/>
            <person name="Berriz G.F."/>
            <person name="Bertin N."/>
            <person name="Huang J."/>
            <person name="Chuang L.S."/>
            <person name="Li N."/>
            <person name="Mani R."/>
            <person name="Hyman A.A."/>
            <person name="Sonnichsen B."/>
            <person name="Echeverri C.J."/>
            <person name="Roth F.P."/>
            <person name="Vidal M."/>
            <person name="Piano F."/>
        </authorList>
    </citation>
    <scope>SUBCELLULAR LOCATION</scope>
</reference>
<reference key="4">
    <citation type="journal article" date="2009" name="Curr. Biol.">
        <title>Three distinct condensin complexes control C. elegans chromosome dynamics.</title>
        <authorList>
            <person name="Csankovszki G."/>
            <person name="Collette K."/>
            <person name="Spahl K."/>
            <person name="Carey J."/>
            <person name="Snyder M."/>
            <person name="Petty E."/>
            <person name="Patel U."/>
            <person name="Tabuchi T."/>
            <person name="Liu H."/>
            <person name="McLeod I."/>
            <person name="Thompson J."/>
            <person name="Sarkeshik A."/>
            <person name="Sarkesik A."/>
            <person name="Yates J."/>
            <person name="Meyer B.J."/>
            <person name="Hagstrom K."/>
        </authorList>
    </citation>
    <scope>FUNCTION</scope>
    <scope>IDENTIFICATION IN A CONDENSIN II COMPLEX</scope>
    <scope>INTERACTION WITH MIX-1; SMC-4; HCP-6 AND CAPG-2</scope>
    <scope>SUBCELLULAR LOCATION</scope>
    <scope>DISRUPTION PHENOTYPE</scope>
</reference>
<reference key="5">
    <citation type="journal article" date="2017" name="PLoS Genet.">
        <title>An SMC-like protein binds and regulates Caenorhabditis elegans condensins.</title>
        <authorList>
            <person name="Chao L.F."/>
            <person name="Singh M."/>
            <person name="Thompson J."/>
            <person name="Yates J.R. III"/>
            <person name="Hagstrom K.A."/>
        </authorList>
    </citation>
    <scope>INTERACTION WITH MIX-1; SMC-4; CAPG-2 AND HCP-6</scope>
    <scope>IDENTIFICATION BY MASS SPECTROMETRY</scope>
</reference>
<protein>
    <recommendedName>
        <fullName evidence="6">Condensin-2 complex subunit kle-2</fullName>
    </recommendedName>
    <alternativeName>
        <fullName>Kleisin, abnormal closure, protein 2</fullName>
    </alternativeName>
</protein>
<keyword id="KW-0131">Cell cycle</keyword>
<keyword id="KW-0132">Cell division</keyword>
<keyword id="KW-0137">Centromere</keyword>
<keyword id="KW-0158">Chromosome</keyword>
<keyword id="KW-0175">Coiled coil</keyword>
<keyword id="KW-0469">Meiosis</keyword>
<keyword id="KW-0498">Mitosis</keyword>
<keyword id="KW-0539">Nucleus</keyword>
<keyword id="KW-1185">Reference proteome</keyword>
<feature type="chain" id="PRO_0000065201" description="Condensin-2 complex subunit kle-2">
    <location>
        <begin position="1"/>
        <end position="821"/>
    </location>
</feature>
<feature type="region of interest" description="Disordered" evidence="2">
    <location>
        <begin position="389"/>
        <end position="426"/>
    </location>
</feature>
<feature type="coiled-coil region" evidence="1">
    <location>
        <begin position="529"/>
        <end position="561"/>
    </location>
</feature>
<feature type="compositionally biased region" description="Acidic residues" evidence="2">
    <location>
        <begin position="409"/>
        <end position="424"/>
    </location>
</feature>
<organism>
    <name type="scientific">Caenorhabditis elegans</name>
    <dbReference type="NCBI Taxonomy" id="6239"/>
    <lineage>
        <taxon>Eukaryota</taxon>
        <taxon>Metazoa</taxon>
        <taxon>Ecdysozoa</taxon>
        <taxon>Nematoda</taxon>
        <taxon>Chromadorea</taxon>
        <taxon>Rhabditida</taxon>
        <taxon>Rhabditina</taxon>
        <taxon>Rhabditomorpha</taxon>
        <taxon>Rhabditoidea</taxon>
        <taxon>Rhabditidae</taxon>
        <taxon>Peloderinae</taxon>
        <taxon>Caenorhabditis</taxon>
    </lineage>
</organism>
<sequence>MTRNAPPGQESTDLAWLVTPAKDLVENFSIDVLKALAGYLEVIRQESEDTDNQVDAATTYRLFDFQRACRIIQGSCAVYGRKVDHVYELTISVVDLVENKGQDDGNTGSRRGAGRRKNFNLGSTNYDLADIDSLKQEALANFEKTVKEEKKSIDAVRMVENAEVIESQYERKSCLVAKPTQFMFKLNYGQLNRTDEQILNAKSRPDVIGKVKDFEIKKSKVKHDQQILYSHDCYRGNLDQFTLPGARWMPDNKELAANFGVADLEVELDLEQEHEKISAYGPFKDPLSGREVVPPPRWFIEQEAVRQNQEIQSRATSRAITIAAKTLRDSQGFGSQPTRLSQPFVERHRQSNHLNDFLSFVEGRVNKNRPSTHLTTGLVDMFVDNFGSVMQNDEPNTSRRPDENYAPMDFDDDFGGGGDDDDDDYIRNLSRRDEKRAPAPWDELDKNHIIWYTGDENLPVVSKPVKKITKFQPKPAEMLARKQRREEKINKSRRDEFMETHDYLQDYYYWRSAARINPIKDWKIESLRTAILAEKKRRIKEKTAKIREARIQNMQRKRTARVIPVEQFEPVTEDIPTSNRRTLGAEYDDVVDEDLAAEVELSMFGGGFDDDEEDVRPRGERPPMAPNNLEFDALQTDFDIPPAEYVPLRFEDIDDAELNSVINLPGNLLIDKALPLLKKFAENRTDREQMAYEMAKAYEDVDVAVSTLQEHVDKWHSRMEPILEEGETRKEYDVHAVGRAVIGQYDIEGGTKRLLDLVMDRPWYEISRYFLSCLFMCNVGNVMVSEDMELPLEERINSMKITLLKRDMHCEMFKEAGALDA</sequence>
<gene>
    <name type="primary">kle-2</name>
    <name type="ORF">C29E4.2</name>
</gene>
<evidence type="ECO:0000255" key="1"/>
<evidence type="ECO:0000256" key="2">
    <source>
        <dbReference type="SAM" id="MobiDB-lite"/>
    </source>
</evidence>
<evidence type="ECO:0000269" key="3">
    <source>
    </source>
</evidence>
<evidence type="ECO:0000269" key="4">
    <source>
    </source>
</evidence>
<evidence type="ECO:0000269" key="5">
    <source>
    </source>
</evidence>
<evidence type="ECO:0000305" key="6"/>
<comment type="function">
    <text evidence="4">Regulatory subunit of the condensin II complex, a complex that seems to play a role in prophase chromosome condensation and in chromosome segregation in mitosis and in meiosis.</text>
</comment>
<comment type="subunit">
    <text evidence="4 5">Component of the condensin II complex, which contains the mix-1/SMC2 and smc-4/SMC4 heterodimer, and three non SMC subunits, capg-2, kle-2 and hcp-6 that probably regulate the complex (PubMed:19119011). Within the complex, interacts with mix-1, smc-4, capg-2 and hcp-6 (PubMed:19119011, PubMed:28301465).</text>
</comment>
<comment type="interaction">
    <interactant intactId="EBI-2002861">
        <id>P34341</id>
    </interactant>
    <interactant intactId="EBI-6458495">
        <id>Q20818</id>
        <label>capg-2</label>
    </interactant>
    <organismsDiffer>false</organismsDiffer>
    <experiments>4</experiments>
</comment>
<comment type="subcellular location">
    <subcellularLocation>
        <location evidence="3 4">Nucleus</location>
    </subcellularLocation>
    <subcellularLocation>
        <location evidence="3 4">Chromosome</location>
    </subcellularLocation>
    <subcellularLocation>
        <location evidence="3 4">Chromosome</location>
        <location evidence="3 4">Centromere</location>
    </subcellularLocation>
    <text evidence="3 4">Localizes to the core of each sister chromatid in meiosis (PubMed:19119011).</text>
</comment>
<comment type="disruption phenotype">
    <text evidence="4">RNAi-mediated knockdown leads to disorganized chromosome morphology, causes DNA bridges in mitosis and leads to chromosome segregation defects in mitosis and meiosis.</text>
</comment>
<comment type="similarity">
    <text evidence="6">Belongs to the CND2 H2 (condensin-2 subunit 2) family.</text>
</comment>
<name>KLE2_CAEEL</name>
<dbReference type="EMBL" id="FO080706">
    <property type="protein sequence ID" value="CCD66003.1"/>
    <property type="molecule type" value="Genomic_DNA"/>
</dbReference>
<dbReference type="RefSeq" id="NP_498727.2">
    <property type="nucleotide sequence ID" value="NM_066326.6"/>
</dbReference>
<dbReference type="SMR" id="P34341"/>
<dbReference type="BioGRID" id="41323">
    <property type="interactions" value="20"/>
</dbReference>
<dbReference type="ComplexPortal" id="CPX-1272">
    <property type="entry name" value="Condensin II complex"/>
</dbReference>
<dbReference type="FunCoup" id="P34341">
    <property type="interactions" value="1289"/>
</dbReference>
<dbReference type="IntAct" id="P34341">
    <property type="interactions" value="13"/>
</dbReference>
<dbReference type="STRING" id="6239.C29E4.2.1"/>
<dbReference type="PaxDb" id="6239-C29E4.2"/>
<dbReference type="PeptideAtlas" id="P34341"/>
<dbReference type="EnsemblMetazoa" id="C29E4.2.1">
    <property type="protein sequence ID" value="C29E4.2.1"/>
    <property type="gene ID" value="WBGene00016202"/>
</dbReference>
<dbReference type="GeneID" id="176116"/>
<dbReference type="KEGG" id="cel:CELE_C29E4.2"/>
<dbReference type="UCSC" id="C29E4.2">
    <property type="organism name" value="c. elegans"/>
</dbReference>
<dbReference type="AGR" id="WB:WBGene00016202"/>
<dbReference type="CTD" id="176116"/>
<dbReference type="WormBase" id="C29E4.2">
    <property type="protein sequence ID" value="CE30620"/>
    <property type="gene ID" value="WBGene00016202"/>
    <property type="gene designation" value="kle-2"/>
</dbReference>
<dbReference type="eggNOG" id="KOG2359">
    <property type="taxonomic scope" value="Eukaryota"/>
</dbReference>
<dbReference type="GeneTree" id="ENSGT00390000014443"/>
<dbReference type="HOGENOM" id="CLU_013262_0_0_1"/>
<dbReference type="InParanoid" id="P34341"/>
<dbReference type="OMA" id="QMAYEMA"/>
<dbReference type="OrthoDB" id="10038475at2759"/>
<dbReference type="Reactome" id="R-CEL-2299718">
    <property type="pathway name" value="Condensation of Prophase Chromosomes"/>
</dbReference>
<dbReference type="PRO" id="PR:P34341"/>
<dbReference type="Proteomes" id="UP000001940">
    <property type="component" value="Chromosome III"/>
</dbReference>
<dbReference type="Bgee" id="WBGene00016202">
    <property type="expression patterns" value="Expressed in embryo and 4 other cell types or tissues"/>
</dbReference>
<dbReference type="GO" id="GO:0000775">
    <property type="term" value="C:chromosome, centromeric region"/>
    <property type="evidence" value="ECO:0007669"/>
    <property type="project" value="UniProtKB-SubCell"/>
</dbReference>
<dbReference type="GO" id="GO:0000796">
    <property type="term" value="C:condensin complex"/>
    <property type="evidence" value="ECO:0000353"/>
    <property type="project" value="ComplexPortal"/>
</dbReference>
<dbReference type="GO" id="GO:0005634">
    <property type="term" value="C:nucleus"/>
    <property type="evidence" value="ECO:0000318"/>
    <property type="project" value="GO_Central"/>
</dbReference>
<dbReference type="GO" id="GO:0003682">
    <property type="term" value="F:chromatin binding"/>
    <property type="evidence" value="ECO:0000318"/>
    <property type="project" value="GO_Central"/>
</dbReference>
<dbReference type="GO" id="GO:0051301">
    <property type="term" value="P:cell division"/>
    <property type="evidence" value="ECO:0007669"/>
    <property type="project" value="UniProtKB-KW"/>
</dbReference>
<dbReference type="GO" id="GO:0010032">
    <property type="term" value="P:meiotic chromosome condensation"/>
    <property type="evidence" value="ECO:0000318"/>
    <property type="project" value="GO_Central"/>
</dbReference>
<dbReference type="GO" id="GO:0045132">
    <property type="term" value="P:meiotic chromosome segregation"/>
    <property type="evidence" value="ECO:0000303"/>
    <property type="project" value="ComplexPortal"/>
</dbReference>
<dbReference type="GO" id="GO:0000070">
    <property type="term" value="P:mitotic sister chromatid segregation"/>
    <property type="evidence" value="ECO:0000315"/>
    <property type="project" value="WormBase"/>
</dbReference>
<dbReference type="GO" id="GO:0051306">
    <property type="term" value="P:mitotic sister chromatid separation"/>
    <property type="evidence" value="ECO:0000318"/>
    <property type="project" value="GO_Central"/>
</dbReference>
<dbReference type="InterPro" id="IPR031737">
    <property type="entry name" value="CNDH2_C"/>
</dbReference>
<dbReference type="InterPro" id="IPR009378">
    <property type="entry name" value="H2_N"/>
</dbReference>
<dbReference type="InterPro" id="IPR031739">
    <property type="entry name" value="Ncaph2"/>
</dbReference>
<dbReference type="PANTHER" id="PTHR14324">
    <property type="entry name" value="CONDENSIN-2 COMPLEX SUBUNIT H2"/>
    <property type="match status" value="1"/>
</dbReference>
<dbReference type="PANTHER" id="PTHR14324:SF3">
    <property type="entry name" value="CONDENSIN-2 COMPLEX SUBUNIT H2"/>
    <property type="match status" value="1"/>
</dbReference>
<dbReference type="Pfam" id="PF16858">
    <property type="entry name" value="CNDH2_C"/>
    <property type="match status" value="1"/>
</dbReference>
<dbReference type="Pfam" id="PF06278">
    <property type="entry name" value="CNDH2_N"/>
    <property type="match status" value="1"/>
</dbReference>
<proteinExistence type="evidence at protein level"/>
<accession>P34341</accession>